<keyword id="KW-0068">Autocatalytic cleavage</keyword>
<keyword id="KW-0210">Decarboxylase</keyword>
<keyword id="KW-0456">Lyase</keyword>
<keyword id="KW-0620">Polyamine biosynthesis</keyword>
<keyword id="KW-0670">Pyruvate</keyword>
<keyword id="KW-0949">S-adenosyl-L-methionine</keyword>
<keyword id="KW-0704">Schiff base</keyword>
<keyword id="KW-0745">Spermidine biosynthesis</keyword>
<keyword id="KW-0865">Zymogen</keyword>
<proteinExistence type="inferred from homology"/>
<protein>
    <recommendedName>
        <fullName evidence="1">S-adenosylmethionine decarboxylase proenzyme</fullName>
        <shortName evidence="1">AdoMetDC</shortName>
        <shortName evidence="1">SAMDC</shortName>
        <ecNumber evidence="1">4.1.1.50</ecNumber>
    </recommendedName>
    <component>
        <recommendedName>
            <fullName evidence="1">S-adenosylmethionine decarboxylase beta chain</fullName>
        </recommendedName>
    </component>
    <component>
        <recommendedName>
            <fullName evidence="1">S-adenosylmethionine decarboxylase alpha chain</fullName>
        </recommendedName>
    </component>
</protein>
<organism>
    <name type="scientific">Escherichia coli O17:K52:H18 (strain UMN026 / ExPEC)</name>
    <dbReference type="NCBI Taxonomy" id="585056"/>
    <lineage>
        <taxon>Bacteria</taxon>
        <taxon>Pseudomonadati</taxon>
        <taxon>Pseudomonadota</taxon>
        <taxon>Gammaproteobacteria</taxon>
        <taxon>Enterobacterales</taxon>
        <taxon>Enterobacteriaceae</taxon>
        <taxon>Escherichia</taxon>
    </lineage>
</organism>
<name>SPED_ECOLU</name>
<feature type="chain" id="PRO_1000125483" description="S-adenosylmethionine decarboxylase beta chain" evidence="1">
    <location>
        <begin position="1"/>
        <end position="111"/>
    </location>
</feature>
<feature type="chain" id="PRO_1000125484" description="S-adenosylmethionine decarboxylase alpha chain" evidence="1">
    <location>
        <begin position="112"/>
        <end position="264"/>
    </location>
</feature>
<feature type="active site" description="Schiff-base intermediate with substrate; via pyruvic acid" evidence="1">
    <location>
        <position position="112"/>
    </location>
</feature>
<feature type="active site" description="Proton acceptor; for processing activity" evidence="1">
    <location>
        <position position="117"/>
    </location>
</feature>
<feature type="active site" description="Proton donor; for catalytic activity" evidence="1">
    <location>
        <position position="140"/>
    </location>
</feature>
<feature type="site" description="Cleavage (non-hydrolytic); by autolysis" evidence="1">
    <location>
        <begin position="111"/>
        <end position="112"/>
    </location>
</feature>
<feature type="modified residue" description="Pyruvic acid (Ser); by autocatalysis" evidence="1">
    <location>
        <position position="112"/>
    </location>
</feature>
<gene>
    <name evidence="1" type="primary">speD</name>
    <name type="ordered locus">ECUMN_0117</name>
</gene>
<reference key="1">
    <citation type="journal article" date="2009" name="PLoS Genet.">
        <title>Organised genome dynamics in the Escherichia coli species results in highly diverse adaptive paths.</title>
        <authorList>
            <person name="Touchon M."/>
            <person name="Hoede C."/>
            <person name="Tenaillon O."/>
            <person name="Barbe V."/>
            <person name="Baeriswyl S."/>
            <person name="Bidet P."/>
            <person name="Bingen E."/>
            <person name="Bonacorsi S."/>
            <person name="Bouchier C."/>
            <person name="Bouvet O."/>
            <person name="Calteau A."/>
            <person name="Chiapello H."/>
            <person name="Clermont O."/>
            <person name="Cruveiller S."/>
            <person name="Danchin A."/>
            <person name="Diard M."/>
            <person name="Dossat C."/>
            <person name="Karoui M.E."/>
            <person name="Frapy E."/>
            <person name="Garry L."/>
            <person name="Ghigo J.M."/>
            <person name="Gilles A.M."/>
            <person name="Johnson J."/>
            <person name="Le Bouguenec C."/>
            <person name="Lescat M."/>
            <person name="Mangenot S."/>
            <person name="Martinez-Jehanne V."/>
            <person name="Matic I."/>
            <person name="Nassif X."/>
            <person name="Oztas S."/>
            <person name="Petit M.A."/>
            <person name="Pichon C."/>
            <person name="Rouy Z."/>
            <person name="Ruf C.S."/>
            <person name="Schneider D."/>
            <person name="Tourret J."/>
            <person name="Vacherie B."/>
            <person name="Vallenet D."/>
            <person name="Medigue C."/>
            <person name="Rocha E.P.C."/>
            <person name="Denamur E."/>
        </authorList>
    </citation>
    <scope>NUCLEOTIDE SEQUENCE [LARGE SCALE GENOMIC DNA]</scope>
    <source>
        <strain>UMN026 / ExPEC</strain>
    </source>
</reference>
<dbReference type="EC" id="4.1.1.50" evidence="1"/>
<dbReference type="EMBL" id="CU928163">
    <property type="protein sequence ID" value="CAR11340.1"/>
    <property type="molecule type" value="Genomic_DNA"/>
</dbReference>
<dbReference type="RefSeq" id="WP_000734287.1">
    <property type="nucleotide sequence ID" value="NC_011751.1"/>
</dbReference>
<dbReference type="RefSeq" id="YP_002410896.1">
    <property type="nucleotide sequence ID" value="NC_011751.1"/>
</dbReference>
<dbReference type="STRING" id="585056.ECUMN_0117"/>
<dbReference type="GeneID" id="93777316"/>
<dbReference type="KEGG" id="eum:ECUMN_0117"/>
<dbReference type="PATRIC" id="fig|585056.7.peg.309"/>
<dbReference type="HOGENOM" id="CLU_092007_0_0_6"/>
<dbReference type="UniPathway" id="UPA00331">
    <property type="reaction ID" value="UER00451"/>
</dbReference>
<dbReference type="Proteomes" id="UP000007097">
    <property type="component" value="Chromosome"/>
</dbReference>
<dbReference type="GO" id="GO:0005829">
    <property type="term" value="C:cytosol"/>
    <property type="evidence" value="ECO:0007669"/>
    <property type="project" value="TreeGrafter"/>
</dbReference>
<dbReference type="GO" id="GO:0004014">
    <property type="term" value="F:adenosylmethionine decarboxylase activity"/>
    <property type="evidence" value="ECO:0007669"/>
    <property type="project" value="UniProtKB-UniRule"/>
</dbReference>
<dbReference type="GO" id="GO:0008295">
    <property type="term" value="P:spermidine biosynthetic process"/>
    <property type="evidence" value="ECO:0007669"/>
    <property type="project" value="UniProtKB-UniRule"/>
</dbReference>
<dbReference type="FunFam" id="3.60.90.10:FF:000001">
    <property type="entry name" value="S-adenosylmethionine decarboxylase proenzyme"/>
    <property type="match status" value="1"/>
</dbReference>
<dbReference type="Gene3D" id="3.60.90.10">
    <property type="entry name" value="S-adenosylmethionine decarboxylase"/>
    <property type="match status" value="1"/>
</dbReference>
<dbReference type="HAMAP" id="MF_00465">
    <property type="entry name" value="AdoMetDC_2"/>
    <property type="match status" value="1"/>
</dbReference>
<dbReference type="InterPro" id="IPR003826">
    <property type="entry name" value="AdoMetDC_fam_prok"/>
</dbReference>
<dbReference type="InterPro" id="IPR009165">
    <property type="entry name" value="S-AdoMet_deCO2ase_bac"/>
</dbReference>
<dbReference type="InterPro" id="IPR016067">
    <property type="entry name" value="S-AdoMet_deCO2ase_core"/>
</dbReference>
<dbReference type="NCBIfam" id="TIGR03331">
    <property type="entry name" value="SAM_DCase_Eco"/>
    <property type="match status" value="1"/>
</dbReference>
<dbReference type="PANTHER" id="PTHR33866">
    <property type="entry name" value="S-ADENOSYLMETHIONINE DECARBOXYLASE PROENZYME"/>
    <property type="match status" value="1"/>
</dbReference>
<dbReference type="PANTHER" id="PTHR33866:SF1">
    <property type="entry name" value="S-ADENOSYLMETHIONINE DECARBOXYLASE PROENZYME"/>
    <property type="match status" value="1"/>
</dbReference>
<dbReference type="Pfam" id="PF02675">
    <property type="entry name" value="AdoMet_dc"/>
    <property type="match status" value="1"/>
</dbReference>
<dbReference type="PIRSF" id="PIRSF001356">
    <property type="entry name" value="SAM_decarboxylas"/>
    <property type="match status" value="1"/>
</dbReference>
<dbReference type="SUPFAM" id="SSF56276">
    <property type="entry name" value="S-adenosylmethionine decarboxylase"/>
    <property type="match status" value="1"/>
</dbReference>
<accession>B7N7Z0</accession>
<sequence>MKKLKLHGFNNLTKSLSFCIYDICYAKTAEERDGYIAYIDELYNANRLTEILSETCSIIGANILNIARQDYEPQGASVTILVSEEPVDPKLIDKTEHPGPLPETVVAHLDKSHICVHTYPESHPEGGLCTFRADIEVSTCGVISPLKALNYLIHQLESDIVTIDYRVRGFTRDINGMKHFIDHEINSIQNFMSDDMKALYDMVDVNVYQENIFHTKMLLKEFDLKHYMFHTKPEDLTDSERQEITAALWKEMREIYYGRNMPAV</sequence>
<evidence type="ECO:0000255" key="1">
    <source>
        <dbReference type="HAMAP-Rule" id="MF_00465"/>
    </source>
</evidence>
<comment type="function">
    <text evidence="1">Catalyzes the decarboxylation of S-adenosylmethionine to S-adenosylmethioninamine (dcAdoMet), the propylamine donor required for the synthesis of the polyamines spermine and spermidine from the diamine putrescine.</text>
</comment>
<comment type="catalytic activity">
    <reaction evidence="1">
        <text>S-adenosyl-L-methionine + H(+) = S-adenosyl 3-(methylsulfanyl)propylamine + CO2</text>
        <dbReference type="Rhea" id="RHEA:15981"/>
        <dbReference type="ChEBI" id="CHEBI:15378"/>
        <dbReference type="ChEBI" id="CHEBI:16526"/>
        <dbReference type="ChEBI" id="CHEBI:57443"/>
        <dbReference type="ChEBI" id="CHEBI:59789"/>
        <dbReference type="EC" id="4.1.1.50"/>
    </reaction>
</comment>
<comment type="cofactor">
    <cofactor evidence="1">
        <name>pyruvate</name>
        <dbReference type="ChEBI" id="CHEBI:15361"/>
    </cofactor>
    <text evidence="1">Binds 1 pyruvoyl group covalently per subunit.</text>
</comment>
<comment type="pathway">
    <text evidence="1">Amine and polyamine biosynthesis; S-adenosylmethioninamine biosynthesis; S-adenosylmethioninamine from S-adenosyl-L-methionine: step 1/1.</text>
</comment>
<comment type="subunit">
    <text evidence="1">Heterooctamer of four alpha and four beta chains arranged as a tetramer of alpha/beta heterodimers.</text>
</comment>
<comment type="PTM">
    <text evidence="1">Is synthesized initially as an inactive proenzyme. Formation of the active enzyme involves a self-maturation process in which the active site pyruvoyl group is generated from an internal serine residue via an autocatalytic post-translational modification. Two non-identical subunits are generated from the proenzyme in this reaction, and the pyruvate is formed at the N-terminus of the alpha chain, which is derived from the carboxyl end of the proenzyme. The post-translation cleavage follows an unusual pathway, termed non-hydrolytic serinolysis, in which the side chain hydroxyl group of the serine supplies its oxygen atom to form the C-terminus of the beta chain, while the remainder of the serine residue undergoes an oxidative deamination to produce ammonia and the pyruvoyl group blocking the N-terminus of the alpha chain.</text>
</comment>
<comment type="similarity">
    <text evidence="1">Belongs to the prokaryotic AdoMetDC family. Type 2 subfamily.</text>
</comment>